<name>MNMG_RHOPT</name>
<keyword id="KW-0963">Cytoplasm</keyword>
<keyword id="KW-0274">FAD</keyword>
<keyword id="KW-0285">Flavoprotein</keyword>
<keyword id="KW-0520">NAD</keyword>
<keyword id="KW-0819">tRNA processing</keyword>
<gene>
    <name evidence="1" type="primary">mnmG</name>
    <name evidence="1" type="synonym">gidA</name>
    <name type="ordered locus">Rpal_0296</name>
</gene>
<accession>B3Q8A7</accession>
<reference key="1">
    <citation type="submission" date="2008-05" db="EMBL/GenBank/DDBJ databases">
        <title>Complete sequence of Rhodopseudomonas palustris TIE-1.</title>
        <authorList>
            <consortium name="US DOE Joint Genome Institute"/>
            <person name="Lucas S."/>
            <person name="Copeland A."/>
            <person name="Lapidus A."/>
            <person name="Glavina del Rio T."/>
            <person name="Dalin E."/>
            <person name="Tice H."/>
            <person name="Pitluck S."/>
            <person name="Chain P."/>
            <person name="Malfatti S."/>
            <person name="Shin M."/>
            <person name="Vergez L."/>
            <person name="Lang D."/>
            <person name="Schmutz J."/>
            <person name="Larimer F."/>
            <person name="Land M."/>
            <person name="Hauser L."/>
            <person name="Kyrpides N."/>
            <person name="Mikhailova N."/>
            <person name="Emerson D."/>
            <person name="Newman D.K."/>
            <person name="Roden E."/>
            <person name="Richardson P."/>
        </authorList>
    </citation>
    <scope>NUCLEOTIDE SEQUENCE [LARGE SCALE GENOMIC DNA]</scope>
    <source>
        <strain>TIE-1</strain>
    </source>
</reference>
<comment type="function">
    <text evidence="1">NAD-binding protein involved in the addition of a carboxymethylaminomethyl (cmnm) group at the wobble position (U34) of certain tRNAs, forming tRNA-cmnm(5)s(2)U34.</text>
</comment>
<comment type="cofactor">
    <cofactor evidence="1">
        <name>FAD</name>
        <dbReference type="ChEBI" id="CHEBI:57692"/>
    </cofactor>
</comment>
<comment type="subunit">
    <text evidence="1">Homodimer. Heterotetramer of two MnmE and two MnmG subunits.</text>
</comment>
<comment type="subcellular location">
    <subcellularLocation>
        <location evidence="1">Cytoplasm</location>
    </subcellularLocation>
</comment>
<comment type="similarity">
    <text evidence="1">Belongs to the MnmG family.</text>
</comment>
<dbReference type="EMBL" id="CP001096">
    <property type="protein sequence ID" value="ACE98856.1"/>
    <property type="molecule type" value="Genomic_DNA"/>
</dbReference>
<dbReference type="RefSeq" id="WP_012494047.1">
    <property type="nucleotide sequence ID" value="NC_011004.1"/>
</dbReference>
<dbReference type="SMR" id="B3Q8A7"/>
<dbReference type="KEGG" id="rpt:Rpal_0296"/>
<dbReference type="HOGENOM" id="CLU_007831_2_2_5"/>
<dbReference type="OrthoDB" id="9815560at2"/>
<dbReference type="Proteomes" id="UP000001725">
    <property type="component" value="Chromosome"/>
</dbReference>
<dbReference type="GO" id="GO:0005829">
    <property type="term" value="C:cytosol"/>
    <property type="evidence" value="ECO:0007669"/>
    <property type="project" value="TreeGrafter"/>
</dbReference>
<dbReference type="GO" id="GO:0050660">
    <property type="term" value="F:flavin adenine dinucleotide binding"/>
    <property type="evidence" value="ECO:0007669"/>
    <property type="project" value="UniProtKB-UniRule"/>
</dbReference>
<dbReference type="GO" id="GO:0030488">
    <property type="term" value="P:tRNA methylation"/>
    <property type="evidence" value="ECO:0007669"/>
    <property type="project" value="TreeGrafter"/>
</dbReference>
<dbReference type="GO" id="GO:0002098">
    <property type="term" value="P:tRNA wobble uridine modification"/>
    <property type="evidence" value="ECO:0007669"/>
    <property type="project" value="InterPro"/>
</dbReference>
<dbReference type="FunFam" id="3.50.50.60:FF:000145">
    <property type="entry name" value="tRNA uridine 5-carboxymethylaminomethyl modification enzyme"/>
    <property type="match status" value="1"/>
</dbReference>
<dbReference type="FunFam" id="1.10.150.570:FF:000001">
    <property type="entry name" value="tRNA uridine 5-carboxymethylaminomethyl modification enzyme MnmG"/>
    <property type="match status" value="1"/>
</dbReference>
<dbReference type="FunFam" id="3.50.50.60:FF:000002">
    <property type="entry name" value="tRNA uridine 5-carboxymethylaminomethyl modification enzyme MnmG"/>
    <property type="match status" value="1"/>
</dbReference>
<dbReference type="Gene3D" id="3.50.50.60">
    <property type="entry name" value="FAD/NAD(P)-binding domain"/>
    <property type="match status" value="2"/>
</dbReference>
<dbReference type="Gene3D" id="1.10.150.570">
    <property type="entry name" value="GidA associated domain, C-terminal subdomain"/>
    <property type="match status" value="1"/>
</dbReference>
<dbReference type="Gene3D" id="1.10.10.1800">
    <property type="entry name" value="tRNA uridine 5-carboxymethylaminomethyl modification enzyme MnmG/GidA"/>
    <property type="match status" value="1"/>
</dbReference>
<dbReference type="HAMAP" id="MF_00129">
    <property type="entry name" value="MnmG_GidA"/>
    <property type="match status" value="1"/>
</dbReference>
<dbReference type="InterPro" id="IPR036188">
    <property type="entry name" value="FAD/NAD-bd_sf"/>
</dbReference>
<dbReference type="InterPro" id="IPR049312">
    <property type="entry name" value="GIDA_C_N"/>
</dbReference>
<dbReference type="InterPro" id="IPR004416">
    <property type="entry name" value="MnmG"/>
</dbReference>
<dbReference type="InterPro" id="IPR002218">
    <property type="entry name" value="MnmG-rel"/>
</dbReference>
<dbReference type="InterPro" id="IPR020595">
    <property type="entry name" value="MnmG-rel_CS"/>
</dbReference>
<dbReference type="InterPro" id="IPR026904">
    <property type="entry name" value="MnmG_C"/>
</dbReference>
<dbReference type="InterPro" id="IPR047001">
    <property type="entry name" value="MnmG_C_subdom"/>
</dbReference>
<dbReference type="InterPro" id="IPR044920">
    <property type="entry name" value="MnmG_C_subdom_sf"/>
</dbReference>
<dbReference type="InterPro" id="IPR040131">
    <property type="entry name" value="MnmG_N"/>
</dbReference>
<dbReference type="NCBIfam" id="TIGR00136">
    <property type="entry name" value="mnmG_gidA"/>
    <property type="match status" value="1"/>
</dbReference>
<dbReference type="PANTHER" id="PTHR11806">
    <property type="entry name" value="GLUCOSE INHIBITED DIVISION PROTEIN A"/>
    <property type="match status" value="1"/>
</dbReference>
<dbReference type="PANTHER" id="PTHR11806:SF0">
    <property type="entry name" value="PROTEIN MTO1 HOMOLOG, MITOCHONDRIAL"/>
    <property type="match status" value="1"/>
</dbReference>
<dbReference type="Pfam" id="PF01134">
    <property type="entry name" value="GIDA"/>
    <property type="match status" value="1"/>
</dbReference>
<dbReference type="Pfam" id="PF21680">
    <property type="entry name" value="GIDA_C_1st"/>
    <property type="match status" value="1"/>
</dbReference>
<dbReference type="Pfam" id="PF13932">
    <property type="entry name" value="SAM_GIDA_C"/>
    <property type="match status" value="1"/>
</dbReference>
<dbReference type="PRINTS" id="PR00411">
    <property type="entry name" value="PNDRDTASEI"/>
</dbReference>
<dbReference type="SMART" id="SM01228">
    <property type="entry name" value="GIDA_assoc_3"/>
    <property type="match status" value="1"/>
</dbReference>
<dbReference type="SUPFAM" id="SSF51905">
    <property type="entry name" value="FAD/NAD(P)-binding domain"/>
    <property type="match status" value="1"/>
</dbReference>
<dbReference type="PROSITE" id="PS01280">
    <property type="entry name" value="GIDA_1"/>
    <property type="match status" value="1"/>
</dbReference>
<dbReference type="PROSITE" id="PS01281">
    <property type="entry name" value="GIDA_2"/>
    <property type="match status" value="1"/>
</dbReference>
<proteinExistence type="inferred from homology"/>
<evidence type="ECO:0000255" key="1">
    <source>
        <dbReference type="HAMAP-Rule" id="MF_00129"/>
    </source>
</evidence>
<protein>
    <recommendedName>
        <fullName evidence="1">tRNA uridine 5-carboxymethylaminomethyl modification enzyme MnmG</fullName>
    </recommendedName>
    <alternativeName>
        <fullName evidence="1">Glucose-inhibited division protein A</fullName>
    </alternativeName>
</protein>
<sequence>MRTSFDVIVIGGGHAGCEAAAAAARIGAATALVTHRFATVGAMSCNPAIGGLGKGHLVREVDALDGLMGRVADAGGIQFRMLNRRKGPAVRGPRAQADRKLYAAAMQIAIQGFPNLSVIEGEADALLWQDGRVSGIRLGDGREFAAAAVVITTGTFLRGLIHLGERSWPAGRIDEAPAMGLSSSFEALGFKLGRLKTGTPPRLDGRTIDWSAVEMQPGDDPAEPFSVLTPAITTPQIECGITRTTPATHEVIRANVHRSPMYSGQIQSTGPRYCPSIEDKIVKFGDRDGHQIFLEPEGLDDPTVYPNGISTSLPEEVQRAILKTIPGLERTEMLRPGYAIEYDHVDPRELEPTLQTKRLRGLFLAGQINGTTGYEEAAAQGLVAGLNAALSAGGGDRAVFDRADGYLGVMIDDLVTRGITEPYRMFTSRAEYRLTLRADNADQRLTDKGLALGCVGVERSAFHHDKMAALSDAKALAQSLSITPNEAAKHGLALNRDGQRRSAFDLLSYPEIEWAQVRAIWPELGKVDPAIAVHVEIDAKYHVYLERQTADVEAFRRDESLGLTDVDYAAVPGLSNEARTRLERHRPHTVGQAGRLDGITPAALGILAAYLRREQRKRKSTG</sequence>
<feature type="chain" id="PRO_1000122753" description="tRNA uridine 5-carboxymethylaminomethyl modification enzyme MnmG">
    <location>
        <begin position="1"/>
        <end position="622"/>
    </location>
</feature>
<feature type="binding site" evidence="1">
    <location>
        <begin position="11"/>
        <end position="16"/>
    </location>
    <ligand>
        <name>FAD</name>
        <dbReference type="ChEBI" id="CHEBI:57692"/>
    </ligand>
</feature>
<feature type="binding site" evidence="1">
    <location>
        <begin position="270"/>
        <end position="284"/>
    </location>
    <ligand>
        <name>NAD(+)</name>
        <dbReference type="ChEBI" id="CHEBI:57540"/>
    </ligand>
</feature>
<organism>
    <name type="scientific">Rhodopseudomonas palustris (strain TIE-1)</name>
    <dbReference type="NCBI Taxonomy" id="395960"/>
    <lineage>
        <taxon>Bacteria</taxon>
        <taxon>Pseudomonadati</taxon>
        <taxon>Pseudomonadota</taxon>
        <taxon>Alphaproteobacteria</taxon>
        <taxon>Hyphomicrobiales</taxon>
        <taxon>Nitrobacteraceae</taxon>
        <taxon>Rhodopseudomonas</taxon>
    </lineage>
</organism>